<organism>
    <name type="scientific">Nitrobacter hamburgensis (strain DSM 10229 / NCIMB 13809 / X14)</name>
    <dbReference type="NCBI Taxonomy" id="323097"/>
    <lineage>
        <taxon>Bacteria</taxon>
        <taxon>Pseudomonadati</taxon>
        <taxon>Pseudomonadota</taxon>
        <taxon>Alphaproteobacteria</taxon>
        <taxon>Hyphomicrobiales</taxon>
        <taxon>Nitrobacteraceae</taxon>
        <taxon>Nitrobacter</taxon>
    </lineage>
</organism>
<sequence>MFDFDGLSNAFSCQTVLCVGDLMLDEFVYGEISRISPEAPAPVIAVQRSEINVGGAGNVARNIAALGARCIFVGLAGEDEAGVRLRTTLSREGLIEPLLISDPARPTTRKVRFVSDHFSTHMLRADWETPAPASGVVEQALIDAILPQLPRADIVLLSDYAKGVLTARVIRDVIDAARGLGKRVIVDPKSANFGIYSGATLLTPNRKEFADATRSRADDQASIAAAAREVMRLVDGEALLVTQSEHGMTLVPREGEVIHVPAHTVKVRDVTGAGDTVVATLAVSLAAGADWETALRTASAAAAVAVGKSGTAVVTLAELRRKILPPAFLAAEEKIAQSTDDLDQRLSAWREQGLRIGFTNGCFDILHPGHVKVLTGARAACDRLVVGLNSDASVTRLKGEGRPIQDERARAEVLAALEAVDLVVIFEEDTPMNLIERIQPNVLVKGGDYSLEQVVGQELVTARGGEVVLIDILRGFSTTSLVKRAGGRA</sequence>
<name>HLDE_NITHX</name>
<dbReference type="EC" id="2.7.1.167" evidence="1"/>
<dbReference type="EC" id="2.7.7.70" evidence="1"/>
<dbReference type="EMBL" id="CP000319">
    <property type="protein sequence ID" value="ABE62124.1"/>
    <property type="molecule type" value="Genomic_DNA"/>
</dbReference>
<dbReference type="RefSeq" id="WP_011509816.1">
    <property type="nucleotide sequence ID" value="NC_007964.1"/>
</dbReference>
<dbReference type="SMR" id="Q1QNS3"/>
<dbReference type="STRING" id="323097.Nham_1299"/>
<dbReference type="KEGG" id="nha:Nham_1299"/>
<dbReference type="eggNOG" id="COG0615">
    <property type="taxonomic scope" value="Bacteria"/>
</dbReference>
<dbReference type="eggNOG" id="COG2870">
    <property type="taxonomic scope" value="Bacteria"/>
</dbReference>
<dbReference type="HOGENOM" id="CLU_021150_2_1_5"/>
<dbReference type="OrthoDB" id="9802794at2"/>
<dbReference type="UniPathway" id="UPA00356">
    <property type="reaction ID" value="UER00437"/>
</dbReference>
<dbReference type="UniPathway" id="UPA00356">
    <property type="reaction ID" value="UER00439"/>
</dbReference>
<dbReference type="Proteomes" id="UP000001953">
    <property type="component" value="Chromosome"/>
</dbReference>
<dbReference type="GO" id="GO:0005829">
    <property type="term" value="C:cytosol"/>
    <property type="evidence" value="ECO:0007669"/>
    <property type="project" value="TreeGrafter"/>
</dbReference>
<dbReference type="GO" id="GO:0005524">
    <property type="term" value="F:ATP binding"/>
    <property type="evidence" value="ECO:0007669"/>
    <property type="project" value="UniProtKB-UniRule"/>
</dbReference>
<dbReference type="GO" id="GO:0033785">
    <property type="term" value="F:heptose 7-phosphate kinase activity"/>
    <property type="evidence" value="ECO:0007669"/>
    <property type="project" value="UniProtKB-UniRule"/>
</dbReference>
<dbReference type="GO" id="GO:0033786">
    <property type="term" value="F:heptose-1-phosphate adenylyltransferase activity"/>
    <property type="evidence" value="ECO:0007669"/>
    <property type="project" value="UniProtKB-UniRule"/>
</dbReference>
<dbReference type="GO" id="GO:0016773">
    <property type="term" value="F:phosphotransferase activity, alcohol group as acceptor"/>
    <property type="evidence" value="ECO:0007669"/>
    <property type="project" value="InterPro"/>
</dbReference>
<dbReference type="GO" id="GO:0097171">
    <property type="term" value="P:ADP-L-glycero-beta-D-manno-heptose biosynthetic process"/>
    <property type="evidence" value="ECO:0007669"/>
    <property type="project" value="UniProtKB-UniPathway"/>
</dbReference>
<dbReference type="CDD" id="cd01172">
    <property type="entry name" value="RfaE_like"/>
    <property type="match status" value="1"/>
</dbReference>
<dbReference type="Gene3D" id="3.40.1190.20">
    <property type="match status" value="1"/>
</dbReference>
<dbReference type="Gene3D" id="3.40.50.620">
    <property type="entry name" value="HUPs"/>
    <property type="match status" value="1"/>
</dbReference>
<dbReference type="HAMAP" id="MF_01603">
    <property type="entry name" value="HldE"/>
    <property type="match status" value="1"/>
</dbReference>
<dbReference type="InterPro" id="IPR023030">
    <property type="entry name" value="Bifunc_HldE"/>
</dbReference>
<dbReference type="InterPro" id="IPR002173">
    <property type="entry name" value="Carboh/pur_kinase_PfkB_CS"/>
</dbReference>
<dbReference type="InterPro" id="IPR004821">
    <property type="entry name" value="Cyt_trans-like"/>
</dbReference>
<dbReference type="InterPro" id="IPR011611">
    <property type="entry name" value="PfkB_dom"/>
</dbReference>
<dbReference type="InterPro" id="IPR011913">
    <property type="entry name" value="RfaE_dom_I"/>
</dbReference>
<dbReference type="InterPro" id="IPR011914">
    <property type="entry name" value="RfaE_dom_II"/>
</dbReference>
<dbReference type="InterPro" id="IPR029056">
    <property type="entry name" value="Ribokinase-like"/>
</dbReference>
<dbReference type="InterPro" id="IPR014729">
    <property type="entry name" value="Rossmann-like_a/b/a_fold"/>
</dbReference>
<dbReference type="NCBIfam" id="TIGR00125">
    <property type="entry name" value="cyt_tran_rel"/>
    <property type="match status" value="1"/>
</dbReference>
<dbReference type="NCBIfam" id="TIGR02198">
    <property type="entry name" value="rfaE_dom_I"/>
    <property type="match status" value="1"/>
</dbReference>
<dbReference type="NCBIfam" id="TIGR02199">
    <property type="entry name" value="rfaE_dom_II"/>
    <property type="match status" value="1"/>
</dbReference>
<dbReference type="PANTHER" id="PTHR46969">
    <property type="entry name" value="BIFUNCTIONAL PROTEIN HLDE"/>
    <property type="match status" value="1"/>
</dbReference>
<dbReference type="PANTHER" id="PTHR46969:SF1">
    <property type="entry name" value="BIFUNCTIONAL PROTEIN HLDE"/>
    <property type="match status" value="1"/>
</dbReference>
<dbReference type="Pfam" id="PF01467">
    <property type="entry name" value="CTP_transf_like"/>
    <property type="match status" value="1"/>
</dbReference>
<dbReference type="Pfam" id="PF00294">
    <property type="entry name" value="PfkB"/>
    <property type="match status" value="1"/>
</dbReference>
<dbReference type="SUPFAM" id="SSF52374">
    <property type="entry name" value="Nucleotidylyl transferase"/>
    <property type="match status" value="1"/>
</dbReference>
<dbReference type="SUPFAM" id="SSF53613">
    <property type="entry name" value="Ribokinase-like"/>
    <property type="match status" value="1"/>
</dbReference>
<dbReference type="PROSITE" id="PS00583">
    <property type="entry name" value="PFKB_KINASES_1"/>
    <property type="match status" value="1"/>
</dbReference>
<keyword id="KW-0067">ATP-binding</keyword>
<keyword id="KW-0119">Carbohydrate metabolism</keyword>
<keyword id="KW-0418">Kinase</keyword>
<keyword id="KW-0511">Multifunctional enzyme</keyword>
<keyword id="KW-0547">Nucleotide-binding</keyword>
<keyword id="KW-0548">Nucleotidyltransferase</keyword>
<keyword id="KW-1185">Reference proteome</keyword>
<keyword id="KW-0808">Transferase</keyword>
<comment type="function">
    <text evidence="1">Catalyzes the phosphorylation of D-glycero-D-manno-heptose 7-phosphate at the C-1 position to selectively form D-glycero-beta-D-manno-heptose-1,7-bisphosphate.</text>
</comment>
<comment type="function">
    <text evidence="1">Catalyzes the ADP transfer from ATP to D-glycero-beta-D-manno-heptose 1-phosphate, yielding ADP-D-glycero-beta-D-manno-heptose.</text>
</comment>
<comment type="catalytic activity">
    <reaction evidence="1">
        <text>D-glycero-beta-D-manno-heptose 7-phosphate + ATP = D-glycero-beta-D-manno-heptose 1,7-bisphosphate + ADP + H(+)</text>
        <dbReference type="Rhea" id="RHEA:27473"/>
        <dbReference type="ChEBI" id="CHEBI:15378"/>
        <dbReference type="ChEBI" id="CHEBI:30616"/>
        <dbReference type="ChEBI" id="CHEBI:60204"/>
        <dbReference type="ChEBI" id="CHEBI:60208"/>
        <dbReference type="ChEBI" id="CHEBI:456216"/>
        <dbReference type="EC" id="2.7.1.167"/>
    </reaction>
</comment>
<comment type="catalytic activity">
    <reaction evidence="1">
        <text>D-glycero-beta-D-manno-heptose 1-phosphate + ATP + H(+) = ADP-D-glycero-beta-D-manno-heptose + diphosphate</text>
        <dbReference type="Rhea" id="RHEA:27465"/>
        <dbReference type="ChEBI" id="CHEBI:15378"/>
        <dbReference type="ChEBI" id="CHEBI:30616"/>
        <dbReference type="ChEBI" id="CHEBI:33019"/>
        <dbReference type="ChEBI" id="CHEBI:59967"/>
        <dbReference type="ChEBI" id="CHEBI:61593"/>
        <dbReference type="EC" id="2.7.7.70"/>
    </reaction>
</comment>
<comment type="pathway">
    <text evidence="1">Nucleotide-sugar biosynthesis; ADP-L-glycero-beta-D-manno-heptose biosynthesis; ADP-L-glycero-beta-D-manno-heptose from D-glycero-beta-D-manno-heptose 7-phosphate: step 1/4.</text>
</comment>
<comment type="pathway">
    <text evidence="1">Nucleotide-sugar biosynthesis; ADP-L-glycero-beta-D-manno-heptose biosynthesis; ADP-L-glycero-beta-D-manno-heptose from D-glycero-beta-D-manno-heptose 7-phosphate: step 3/4.</text>
</comment>
<comment type="subunit">
    <text evidence="1">Homodimer.</text>
</comment>
<comment type="similarity">
    <text evidence="1">In the N-terminal section; belongs to the carbohydrate kinase PfkB family.</text>
</comment>
<comment type="similarity">
    <text evidence="1">In the C-terminal section; belongs to the cytidylyltransferase family.</text>
</comment>
<accession>Q1QNS3</accession>
<feature type="chain" id="PRO_0000255768" description="Bifunctional protein HldE">
    <location>
        <begin position="1"/>
        <end position="489"/>
    </location>
</feature>
<feature type="region of interest" description="Ribokinase">
    <location>
        <begin position="1"/>
        <end position="330"/>
    </location>
</feature>
<feature type="region of interest" description="Cytidylyltransferase">
    <location>
        <begin position="358"/>
        <end position="489"/>
    </location>
</feature>
<feature type="active site" evidence="1">
    <location>
        <position position="275"/>
    </location>
</feature>
<feature type="binding site" evidence="1">
    <location>
        <begin position="205"/>
        <end position="208"/>
    </location>
    <ligand>
        <name>ATP</name>
        <dbReference type="ChEBI" id="CHEBI:30616"/>
    </ligand>
</feature>
<reference key="1">
    <citation type="submission" date="2006-03" db="EMBL/GenBank/DDBJ databases">
        <title>Complete sequence of chromosome of Nitrobacter hamburgensis X14.</title>
        <authorList>
            <consortium name="US DOE Joint Genome Institute"/>
            <person name="Copeland A."/>
            <person name="Lucas S."/>
            <person name="Lapidus A."/>
            <person name="Barry K."/>
            <person name="Detter J.C."/>
            <person name="Glavina del Rio T."/>
            <person name="Hammon N."/>
            <person name="Israni S."/>
            <person name="Dalin E."/>
            <person name="Tice H."/>
            <person name="Pitluck S."/>
            <person name="Chain P."/>
            <person name="Malfatti S."/>
            <person name="Shin M."/>
            <person name="Vergez L."/>
            <person name="Schmutz J."/>
            <person name="Larimer F."/>
            <person name="Land M."/>
            <person name="Hauser L."/>
            <person name="Kyrpides N."/>
            <person name="Ivanova N."/>
            <person name="Ward B."/>
            <person name="Arp D."/>
            <person name="Klotz M."/>
            <person name="Stein L."/>
            <person name="O'Mullan G."/>
            <person name="Starkenburg S."/>
            <person name="Sayavedra L."/>
            <person name="Poret-Peterson A.T."/>
            <person name="Gentry M.E."/>
            <person name="Bruce D."/>
            <person name="Richardson P."/>
        </authorList>
    </citation>
    <scope>NUCLEOTIDE SEQUENCE [LARGE SCALE GENOMIC DNA]</scope>
    <source>
        <strain>DSM 10229 / NCIMB 13809 / X14</strain>
    </source>
</reference>
<gene>
    <name evidence="1" type="primary">hldE</name>
    <name type="ordered locus">Nham_1299</name>
</gene>
<proteinExistence type="inferred from homology"/>
<protein>
    <recommendedName>
        <fullName evidence="1">Bifunctional protein HldE</fullName>
    </recommendedName>
    <domain>
        <recommendedName>
            <fullName evidence="1">D-beta-D-heptose 7-phosphate kinase</fullName>
            <ecNumber evidence="1">2.7.1.167</ecNumber>
        </recommendedName>
        <alternativeName>
            <fullName evidence="1">D-beta-D-heptose 7-phosphotransferase</fullName>
        </alternativeName>
        <alternativeName>
            <fullName evidence="1">D-glycero-beta-D-manno-heptose-7-phosphate kinase</fullName>
        </alternativeName>
    </domain>
    <domain>
        <recommendedName>
            <fullName evidence="1">D-beta-D-heptose 1-phosphate adenylyltransferase</fullName>
            <ecNumber evidence="1">2.7.7.70</ecNumber>
        </recommendedName>
        <alternativeName>
            <fullName evidence="1">D-glycero-beta-D-manno-heptose 1-phosphate adenylyltransferase</fullName>
        </alternativeName>
    </domain>
</protein>
<evidence type="ECO:0000255" key="1">
    <source>
        <dbReference type="HAMAP-Rule" id="MF_01603"/>
    </source>
</evidence>